<protein>
    <recommendedName>
        <fullName evidence="1">Lipoprotein signal peptidase</fullName>
        <ecNumber evidence="1">3.4.23.36</ecNumber>
    </recommendedName>
    <alternativeName>
        <fullName evidence="1">Prolipoprotein signal peptidase</fullName>
    </alternativeName>
    <alternativeName>
        <fullName evidence="1">Signal peptidase II</fullName>
        <shortName evidence="1">SPase II</shortName>
    </alternativeName>
</protein>
<name>LSPA_SYNAS</name>
<comment type="function">
    <text evidence="1">This protein specifically catalyzes the removal of signal peptides from prolipoproteins.</text>
</comment>
<comment type="catalytic activity">
    <reaction evidence="1">
        <text>Release of signal peptides from bacterial membrane prolipoproteins. Hydrolyzes -Xaa-Yaa-Zaa-|-(S,diacylglyceryl)Cys-, in which Xaa is hydrophobic (preferably Leu), and Yaa (Ala or Ser) and Zaa (Gly or Ala) have small, neutral side chains.</text>
        <dbReference type="EC" id="3.4.23.36"/>
    </reaction>
</comment>
<comment type="pathway">
    <text evidence="1">Protein modification; lipoprotein biosynthesis (signal peptide cleavage).</text>
</comment>
<comment type="subcellular location">
    <subcellularLocation>
        <location evidence="1">Cell inner membrane</location>
        <topology evidence="1">Multi-pass membrane protein</topology>
    </subcellularLocation>
</comment>
<comment type="similarity">
    <text evidence="1">Belongs to the peptidase A8 family.</text>
</comment>
<accession>Q2LTG5</accession>
<keyword id="KW-0064">Aspartyl protease</keyword>
<keyword id="KW-0997">Cell inner membrane</keyword>
<keyword id="KW-1003">Cell membrane</keyword>
<keyword id="KW-0378">Hydrolase</keyword>
<keyword id="KW-0472">Membrane</keyword>
<keyword id="KW-0645">Protease</keyword>
<keyword id="KW-1185">Reference proteome</keyword>
<keyword id="KW-0812">Transmembrane</keyword>
<keyword id="KW-1133">Transmembrane helix</keyword>
<gene>
    <name evidence="1" type="primary">lspA</name>
    <name type="ordered locus">SYNAS_14970</name>
    <name type="ORF">SYN_01453</name>
</gene>
<sequence>MKKPLILFLITAGLVLLLDQFTKFYVASHFWLHESLPVIDGFFNITYIRNPGAAFGFLAGAPLLFRGLFFTSVTLIAAGLILFYLIKNRVSDLMMVIPLALVLAGAMGNLVDRIRFGEVIDFLDVYIGRYHWPAFNIADTAISIGVLFLVVDMIQKQKEKS</sequence>
<feature type="chain" id="PRO_0000289452" description="Lipoprotein signal peptidase">
    <location>
        <begin position="1"/>
        <end position="161"/>
    </location>
</feature>
<feature type="transmembrane region" description="Helical" evidence="1">
    <location>
        <begin position="6"/>
        <end position="26"/>
    </location>
</feature>
<feature type="transmembrane region" description="Helical" evidence="1">
    <location>
        <begin position="67"/>
        <end position="87"/>
    </location>
</feature>
<feature type="transmembrane region" description="Helical" evidence="1">
    <location>
        <begin position="90"/>
        <end position="110"/>
    </location>
</feature>
<feature type="transmembrane region" description="Helical" evidence="1">
    <location>
        <begin position="134"/>
        <end position="154"/>
    </location>
</feature>
<feature type="active site" evidence="1">
    <location>
        <position position="121"/>
    </location>
</feature>
<feature type="active site" evidence="1">
    <location>
        <position position="139"/>
    </location>
</feature>
<proteinExistence type="inferred from homology"/>
<reference key="1">
    <citation type="journal article" date="2007" name="Proc. Natl. Acad. Sci. U.S.A.">
        <title>The genome of Syntrophus aciditrophicus: life at the thermodynamic limit of microbial growth.</title>
        <authorList>
            <person name="McInerney M.J."/>
            <person name="Rohlin L."/>
            <person name="Mouttaki H."/>
            <person name="Kim U."/>
            <person name="Krupp R.S."/>
            <person name="Rios-Hernandez L."/>
            <person name="Sieber J."/>
            <person name="Struchtemeyer C.G."/>
            <person name="Bhattacharyya A."/>
            <person name="Campbell J.W."/>
            <person name="Gunsalus R.P."/>
        </authorList>
    </citation>
    <scope>NUCLEOTIDE SEQUENCE [LARGE SCALE GENOMIC DNA]</scope>
    <source>
        <strain>SB</strain>
    </source>
</reference>
<evidence type="ECO:0000255" key="1">
    <source>
        <dbReference type="HAMAP-Rule" id="MF_00161"/>
    </source>
</evidence>
<dbReference type="EC" id="3.4.23.36" evidence="1"/>
<dbReference type="EMBL" id="CP000252">
    <property type="protein sequence ID" value="ABC77376.1"/>
    <property type="molecule type" value="Genomic_DNA"/>
</dbReference>
<dbReference type="RefSeq" id="WP_011417398.1">
    <property type="nucleotide sequence ID" value="NC_007759.1"/>
</dbReference>
<dbReference type="SMR" id="Q2LTG5"/>
<dbReference type="FunCoup" id="Q2LTG5">
    <property type="interactions" value="318"/>
</dbReference>
<dbReference type="STRING" id="56780.SYN_01453"/>
<dbReference type="KEGG" id="sat:SYN_01453"/>
<dbReference type="eggNOG" id="COG0597">
    <property type="taxonomic scope" value="Bacteria"/>
</dbReference>
<dbReference type="HOGENOM" id="CLU_083252_4_0_7"/>
<dbReference type="InParanoid" id="Q2LTG5"/>
<dbReference type="OrthoDB" id="9810259at2"/>
<dbReference type="UniPathway" id="UPA00665"/>
<dbReference type="Proteomes" id="UP000001933">
    <property type="component" value="Chromosome"/>
</dbReference>
<dbReference type="GO" id="GO:0005886">
    <property type="term" value="C:plasma membrane"/>
    <property type="evidence" value="ECO:0007669"/>
    <property type="project" value="UniProtKB-SubCell"/>
</dbReference>
<dbReference type="GO" id="GO:0004190">
    <property type="term" value="F:aspartic-type endopeptidase activity"/>
    <property type="evidence" value="ECO:0007669"/>
    <property type="project" value="UniProtKB-UniRule"/>
</dbReference>
<dbReference type="GO" id="GO:0006508">
    <property type="term" value="P:proteolysis"/>
    <property type="evidence" value="ECO:0007669"/>
    <property type="project" value="UniProtKB-KW"/>
</dbReference>
<dbReference type="HAMAP" id="MF_00161">
    <property type="entry name" value="LspA"/>
    <property type="match status" value="1"/>
</dbReference>
<dbReference type="InterPro" id="IPR001872">
    <property type="entry name" value="Peptidase_A8"/>
</dbReference>
<dbReference type="NCBIfam" id="TIGR00077">
    <property type="entry name" value="lspA"/>
    <property type="match status" value="1"/>
</dbReference>
<dbReference type="PANTHER" id="PTHR33695">
    <property type="entry name" value="LIPOPROTEIN SIGNAL PEPTIDASE"/>
    <property type="match status" value="1"/>
</dbReference>
<dbReference type="PANTHER" id="PTHR33695:SF1">
    <property type="entry name" value="LIPOPROTEIN SIGNAL PEPTIDASE"/>
    <property type="match status" value="1"/>
</dbReference>
<dbReference type="Pfam" id="PF01252">
    <property type="entry name" value="Peptidase_A8"/>
    <property type="match status" value="1"/>
</dbReference>
<dbReference type="PRINTS" id="PR00781">
    <property type="entry name" value="LIPOSIGPTASE"/>
</dbReference>
<dbReference type="PROSITE" id="PS00855">
    <property type="entry name" value="SPASE_II"/>
    <property type="match status" value="1"/>
</dbReference>
<organism>
    <name type="scientific">Syntrophus aciditrophicus (strain SB)</name>
    <dbReference type="NCBI Taxonomy" id="56780"/>
    <lineage>
        <taxon>Bacteria</taxon>
        <taxon>Pseudomonadati</taxon>
        <taxon>Thermodesulfobacteriota</taxon>
        <taxon>Syntrophia</taxon>
        <taxon>Syntrophales</taxon>
        <taxon>Syntrophaceae</taxon>
        <taxon>Syntrophus</taxon>
    </lineage>
</organism>